<protein>
    <recommendedName>
        <fullName evidence="1">Phosphoglycerate kinase</fullName>
        <ecNumber evidence="1">2.7.2.3</ecNumber>
    </recommendedName>
</protein>
<dbReference type="EC" id="2.7.2.3" evidence="1"/>
<dbReference type="EMBL" id="CP001337">
    <property type="protein sequence ID" value="ACL23579.1"/>
    <property type="molecule type" value="Genomic_DNA"/>
</dbReference>
<dbReference type="RefSeq" id="WP_012615945.1">
    <property type="nucleotide sequence ID" value="NC_011831.1"/>
</dbReference>
<dbReference type="SMR" id="B8G4H3"/>
<dbReference type="STRING" id="326427.Cagg_0642"/>
<dbReference type="KEGG" id="cag:Cagg_0642"/>
<dbReference type="eggNOG" id="COG0126">
    <property type="taxonomic scope" value="Bacteria"/>
</dbReference>
<dbReference type="HOGENOM" id="CLU_025427_0_2_0"/>
<dbReference type="OrthoDB" id="9808460at2"/>
<dbReference type="UniPathway" id="UPA00109">
    <property type="reaction ID" value="UER00185"/>
</dbReference>
<dbReference type="Proteomes" id="UP000002508">
    <property type="component" value="Chromosome"/>
</dbReference>
<dbReference type="GO" id="GO:0005829">
    <property type="term" value="C:cytosol"/>
    <property type="evidence" value="ECO:0007669"/>
    <property type="project" value="TreeGrafter"/>
</dbReference>
<dbReference type="GO" id="GO:0043531">
    <property type="term" value="F:ADP binding"/>
    <property type="evidence" value="ECO:0007669"/>
    <property type="project" value="TreeGrafter"/>
</dbReference>
<dbReference type="GO" id="GO:0005524">
    <property type="term" value="F:ATP binding"/>
    <property type="evidence" value="ECO:0007669"/>
    <property type="project" value="UniProtKB-KW"/>
</dbReference>
<dbReference type="GO" id="GO:0004618">
    <property type="term" value="F:phosphoglycerate kinase activity"/>
    <property type="evidence" value="ECO:0007669"/>
    <property type="project" value="UniProtKB-UniRule"/>
</dbReference>
<dbReference type="GO" id="GO:0006094">
    <property type="term" value="P:gluconeogenesis"/>
    <property type="evidence" value="ECO:0007669"/>
    <property type="project" value="TreeGrafter"/>
</dbReference>
<dbReference type="GO" id="GO:0006096">
    <property type="term" value="P:glycolytic process"/>
    <property type="evidence" value="ECO:0007669"/>
    <property type="project" value="UniProtKB-UniRule"/>
</dbReference>
<dbReference type="CDD" id="cd00318">
    <property type="entry name" value="Phosphoglycerate_kinase"/>
    <property type="match status" value="1"/>
</dbReference>
<dbReference type="FunFam" id="3.40.50.1260:FF:000002">
    <property type="entry name" value="Phosphoglycerate kinase"/>
    <property type="match status" value="1"/>
</dbReference>
<dbReference type="FunFam" id="3.40.50.1260:FF:000007">
    <property type="entry name" value="Phosphoglycerate kinase"/>
    <property type="match status" value="1"/>
</dbReference>
<dbReference type="Gene3D" id="3.40.50.1260">
    <property type="entry name" value="Phosphoglycerate kinase, N-terminal domain"/>
    <property type="match status" value="2"/>
</dbReference>
<dbReference type="HAMAP" id="MF_00145">
    <property type="entry name" value="Phosphoglyc_kinase"/>
    <property type="match status" value="1"/>
</dbReference>
<dbReference type="InterPro" id="IPR001576">
    <property type="entry name" value="Phosphoglycerate_kinase"/>
</dbReference>
<dbReference type="InterPro" id="IPR015824">
    <property type="entry name" value="Phosphoglycerate_kinase_N"/>
</dbReference>
<dbReference type="InterPro" id="IPR036043">
    <property type="entry name" value="Phosphoglycerate_kinase_sf"/>
</dbReference>
<dbReference type="PANTHER" id="PTHR11406">
    <property type="entry name" value="PHOSPHOGLYCERATE KINASE"/>
    <property type="match status" value="1"/>
</dbReference>
<dbReference type="PANTHER" id="PTHR11406:SF23">
    <property type="entry name" value="PHOSPHOGLYCERATE KINASE 1, CHLOROPLASTIC-RELATED"/>
    <property type="match status" value="1"/>
</dbReference>
<dbReference type="Pfam" id="PF00162">
    <property type="entry name" value="PGK"/>
    <property type="match status" value="1"/>
</dbReference>
<dbReference type="PIRSF" id="PIRSF000724">
    <property type="entry name" value="Pgk"/>
    <property type="match status" value="1"/>
</dbReference>
<dbReference type="PRINTS" id="PR00477">
    <property type="entry name" value="PHGLYCKINASE"/>
</dbReference>
<dbReference type="SUPFAM" id="SSF53748">
    <property type="entry name" value="Phosphoglycerate kinase"/>
    <property type="match status" value="1"/>
</dbReference>
<keyword id="KW-0067">ATP-binding</keyword>
<keyword id="KW-0963">Cytoplasm</keyword>
<keyword id="KW-0324">Glycolysis</keyword>
<keyword id="KW-0418">Kinase</keyword>
<keyword id="KW-0547">Nucleotide-binding</keyword>
<keyword id="KW-0808">Transferase</keyword>
<evidence type="ECO:0000255" key="1">
    <source>
        <dbReference type="HAMAP-Rule" id="MF_00145"/>
    </source>
</evidence>
<feature type="chain" id="PRO_1000192815" description="Phosphoglycerate kinase">
    <location>
        <begin position="1"/>
        <end position="400"/>
    </location>
</feature>
<feature type="binding site" evidence="1">
    <location>
        <begin position="21"/>
        <end position="23"/>
    </location>
    <ligand>
        <name>substrate</name>
    </ligand>
</feature>
<feature type="binding site" evidence="1">
    <location>
        <position position="37"/>
    </location>
    <ligand>
        <name>substrate</name>
    </ligand>
</feature>
<feature type="binding site" evidence="1">
    <location>
        <begin position="60"/>
        <end position="63"/>
    </location>
    <ligand>
        <name>substrate</name>
    </ligand>
</feature>
<feature type="binding site" evidence="1">
    <location>
        <position position="121"/>
    </location>
    <ligand>
        <name>substrate</name>
    </ligand>
</feature>
<feature type="binding site" evidence="1">
    <location>
        <position position="154"/>
    </location>
    <ligand>
        <name>substrate</name>
    </ligand>
</feature>
<feature type="binding site" evidence="1">
    <location>
        <position position="204"/>
    </location>
    <ligand>
        <name>ATP</name>
        <dbReference type="ChEBI" id="CHEBI:30616"/>
    </ligand>
</feature>
<feature type="binding site" evidence="1">
    <location>
        <position position="326"/>
    </location>
    <ligand>
        <name>ATP</name>
        <dbReference type="ChEBI" id="CHEBI:30616"/>
    </ligand>
</feature>
<feature type="binding site" evidence="1">
    <location>
        <begin position="355"/>
        <end position="358"/>
    </location>
    <ligand>
        <name>ATP</name>
        <dbReference type="ChEBI" id="CHEBI:30616"/>
    </ligand>
</feature>
<comment type="catalytic activity">
    <reaction evidence="1">
        <text>(2R)-3-phosphoglycerate + ATP = (2R)-3-phospho-glyceroyl phosphate + ADP</text>
        <dbReference type="Rhea" id="RHEA:14801"/>
        <dbReference type="ChEBI" id="CHEBI:30616"/>
        <dbReference type="ChEBI" id="CHEBI:57604"/>
        <dbReference type="ChEBI" id="CHEBI:58272"/>
        <dbReference type="ChEBI" id="CHEBI:456216"/>
        <dbReference type="EC" id="2.7.2.3"/>
    </reaction>
</comment>
<comment type="pathway">
    <text evidence="1">Carbohydrate degradation; glycolysis; pyruvate from D-glyceraldehyde 3-phosphate: step 2/5.</text>
</comment>
<comment type="subunit">
    <text evidence="1">Monomer.</text>
</comment>
<comment type="subcellular location">
    <subcellularLocation>
        <location evidence="1">Cytoplasm</location>
    </subcellularLocation>
</comment>
<comment type="similarity">
    <text evidence="1">Belongs to the phosphoglycerate kinase family.</text>
</comment>
<organism>
    <name type="scientific">Chloroflexus aggregans (strain MD-66 / DSM 9485)</name>
    <dbReference type="NCBI Taxonomy" id="326427"/>
    <lineage>
        <taxon>Bacteria</taxon>
        <taxon>Bacillati</taxon>
        <taxon>Chloroflexota</taxon>
        <taxon>Chloroflexia</taxon>
        <taxon>Chloroflexales</taxon>
        <taxon>Chloroflexineae</taxon>
        <taxon>Chloroflexaceae</taxon>
        <taxon>Chloroflexus</taxon>
    </lineage>
</organism>
<sequence length="400" mass="42345">MNKKTIRDVDWAGKRALVRVDFNVPLDEQGQITDDTRIRAALPTIRYLLEHGAKVILMSHLGRPKGKPNPKYSLRPVVERLFELLPEATEVKKTEAITGPAAEAAVSMLKPGQVLVLENTRFDPREEANDPQMAAELAKLGDVFVNDAFGTAHRANASTEGVAHYLPAVAGFLMEKELTYIGGALSNPQRPFVTVIGGAKISDKIGVIENLLGKVDALLIGGGMANTFLLAKGLNLGDSLVEPESVPVAQQLMAKAEERGARLLLPVDVVIADAFSAEAQRQVVEVTAIPSGWRVLDIGPKTIELYSAEIRSARTVIWNGPMGVFELEPFAAGTRAIAQAMAEASANGAITIVGGGDSVAAVEQAGLAEKMAHVSTGGGASLELLEGRVLPGVAALQDAE</sequence>
<proteinExistence type="inferred from homology"/>
<accession>B8G4H3</accession>
<name>PGK_CHLAD</name>
<reference key="1">
    <citation type="submission" date="2008-12" db="EMBL/GenBank/DDBJ databases">
        <title>Complete sequence of Chloroflexus aggregans DSM 9485.</title>
        <authorList>
            <consortium name="US DOE Joint Genome Institute"/>
            <person name="Lucas S."/>
            <person name="Copeland A."/>
            <person name="Lapidus A."/>
            <person name="Glavina del Rio T."/>
            <person name="Dalin E."/>
            <person name="Tice H."/>
            <person name="Pitluck S."/>
            <person name="Foster B."/>
            <person name="Larimer F."/>
            <person name="Land M."/>
            <person name="Hauser L."/>
            <person name="Kyrpides N."/>
            <person name="Mikhailova N."/>
            <person name="Bryant D.A."/>
            <person name="Richardson P."/>
        </authorList>
    </citation>
    <scope>NUCLEOTIDE SEQUENCE [LARGE SCALE GENOMIC DNA]</scope>
    <source>
        <strain>MD-66 / DSM 9485</strain>
    </source>
</reference>
<gene>
    <name evidence="1" type="primary">pgk</name>
    <name type="ordered locus">Cagg_0642</name>
</gene>